<accession>B7HY68</accession>
<feature type="chain" id="PRO_1000184652" description="ATP synthase subunit delta">
    <location>
        <begin position="1"/>
        <end position="180"/>
    </location>
</feature>
<name>ATPD_BACC7</name>
<protein>
    <recommendedName>
        <fullName evidence="1">ATP synthase subunit delta</fullName>
    </recommendedName>
    <alternativeName>
        <fullName evidence="1">ATP synthase F(1) sector subunit delta</fullName>
    </alternativeName>
    <alternativeName>
        <fullName evidence="1">F-type ATPase subunit delta</fullName>
        <shortName evidence="1">F-ATPase subunit delta</shortName>
    </alternativeName>
</protein>
<gene>
    <name evidence="1" type="primary">atpH</name>
    <name type="ordered locus">BCAH187_A5486</name>
</gene>
<comment type="function">
    <text evidence="1">F(1)F(0) ATP synthase produces ATP from ADP in the presence of a proton or sodium gradient. F-type ATPases consist of two structural domains, F(1) containing the extramembraneous catalytic core and F(0) containing the membrane proton channel, linked together by a central stalk and a peripheral stalk. During catalysis, ATP synthesis in the catalytic domain of F(1) is coupled via a rotary mechanism of the central stalk subunits to proton translocation.</text>
</comment>
<comment type="function">
    <text evidence="1">This protein is part of the stalk that links CF(0) to CF(1). It either transmits conformational changes from CF(0) to CF(1) or is implicated in proton conduction.</text>
</comment>
<comment type="subunit">
    <text evidence="1">F-type ATPases have 2 components, F(1) - the catalytic core - and F(0) - the membrane proton channel. F(1) has five subunits: alpha(3), beta(3), gamma(1), delta(1), epsilon(1). F(0) has three main subunits: a(1), b(2) and c(10-14). The alpha and beta chains form an alternating ring which encloses part of the gamma chain. F(1) is attached to F(0) by a central stalk formed by the gamma and epsilon chains, while a peripheral stalk is formed by the delta and b chains.</text>
</comment>
<comment type="subcellular location">
    <subcellularLocation>
        <location evidence="1">Cell membrane</location>
        <topology evidence="1">Peripheral membrane protein</topology>
    </subcellularLocation>
</comment>
<comment type="similarity">
    <text evidence="1">Belongs to the ATPase delta chain family.</text>
</comment>
<dbReference type="EMBL" id="CP001177">
    <property type="protein sequence ID" value="ACJ81591.1"/>
    <property type="molecule type" value="Genomic_DNA"/>
</dbReference>
<dbReference type="SMR" id="B7HY68"/>
<dbReference type="KEGG" id="bcr:BCAH187_A5486"/>
<dbReference type="HOGENOM" id="CLU_085114_4_1_9"/>
<dbReference type="Proteomes" id="UP000002214">
    <property type="component" value="Chromosome"/>
</dbReference>
<dbReference type="GO" id="GO:0005886">
    <property type="term" value="C:plasma membrane"/>
    <property type="evidence" value="ECO:0007669"/>
    <property type="project" value="UniProtKB-SubCell"/>
</dbReference>
<dbReference type="GO" id="GO:0045259">
    <property type="term" value="C:proton-transporting ATP synthase complex"/>
    <property type="evidence" value="ECO:0007669"/>
    <property type="project" value="UniProtKB-KW"/>
</dbReference>
<dbReference type="GO" id="GO:0046933">
    <property type="term" value="F:proton-transporting ATP synthase activity, rotational mechanism"/>
    <property type="evidence" value="ECO:0007669"/>
    <property type="project" value="UniProtKB-UniRule"/>
</dbReference>
<dbReference type="Gene3D" id="1.10.520.20">
    <property type="entry name" value="N-terminal domain of the delta subunit of the F1F0-ATP synthase"/>
    <property type="match status" value="1"/>
</dbReference>
<dbReference type="HAMAP" id="MF_01416">
    <property type="entry name" value="ATP_synth_delta_bact"/>
    <property type="match status" value="1"/>
</dbReference>
<dbReference type="InterPro" id="IPR026015">
    <property type="entry name" value="ATP_synth_OSCP/delta_N_sf"/>
</dbReference>
<dbReference type="InterPro" id="IPR020781">
    <property type="entry name" value="ATPase_OSCP/d_CS"/>
</dbReference>
<dbReference type="InterPro" id="IPR000711">
    <property type="entry name" value="ATPase_OSCP/dsu"/>
</dbReference>
<dbReference type="NCBIfam" id="TIGR01145">
    <property type="entry name" value="ATP_synt_delta"/>
    <property type="match status" value="1"/>
</dbReference>
<dbReference type="NCBIfam" id="NF004402">
    <property type="entry name" value="PRK05758.2-2"/>
    <property type="match status" value="1"/>
</dbReference>
<dbReference type="NCBIfam" id="NF004403">
    <property type="entry name" value="PRK05758.2-4"/>
    <property type="match status" value="1"/>
</dbReference>
<dbReference type="PANTHER" id="PTHR11910">
    <property type="entry name" value="ATP SYNTHASE DELTA CHAIN"/>
    <property type="match status" value="1"/>
</dbReference>
<dbReference type="Pfam" id="PF00213">
    <property type="entry name" value="OSCP"/>
    <property type="match status" value="1"/>
</dbReference>
<dbReference type="PRINTS" id="PR00125">
    <property type="entry name" value="ATPASEDELTA"/>
</dbReference>
<dbReference type="SUPFAM" id="SSF47928">
    <property type="entry name" value="N-terminal domain of the delta subunit of the F1F0-ATP synthase"/>
    <property type="match status" value="1"/>
</dbReference>
<dbReference type="PROSITE" id="PS00389">
    <property type="entry name" value="ATPASE_DELTA"/>
    <property type="match status" value="1"/>
</dbReference>
<organism>
    <name type="scientific">Bacillus cereus (strain AH187)</name>
    <dbReference type="NCBI Taxonomy" id="405534"/>
    <lineage>
        <taxon>Bacteria</taxon>
        <taxon>Bacillati</taxon>
        <taxon>Bacillota</taxon>
        <taxon>Bacilli</taxon>
        <taxon>Bacillales</taxon>
        <taxon>Bacillaceae</taxon>
        <taxon>Bacillus</taxon>
        <taxon>Bacillus cereus group</taxon>
    </lineage>
</organism>
<sequence length="180" mass="20482">MSNGIVAKRYAVALFKIAKEKHVLEMFEEELRLVQNVYVKNGELHSFLTQPNISKEQKKTFLANVFGSVSESILNTLYILIDNKRIDILPEIADEYVVLANEERNVADATVYSTRLLSEEEKLNIAEAFAKRTGKDAIRVKNVVDEDLLGGIKVRIGNRIYDGSLQGKLARIQRELMKNR</sequence>
<reference key="1">
    <citation type="submission" date="2008-10" db="EMBL/GenBank/DDBJ databases">
        <title>Genome sequence of Bacillus cereus AH187.</title>
        <authorList>
            <person name="Dodson R.J."/>
            <person name="Durkin A.S."/>
            <person name="Rosovitz M.J."/>
            <person name="Rasko D.A."/>
            <person name="Kolsto A.B."/>
            <person name="Okstad O.A."/>
            <person name="Ravel J."/>
            <person name="Sutton G."/>
        </authorList>
    </citation>
    <scope>NUCLEOTIDE SEQUENCE [LARGE SCALE GENOMIC DNA]</scope>
    <source>
        <strain>AH187</strain>
    </source>
</reference>
<keyword id="KW-0066">ATP synthesis</keyword>
<keyword id="KW-1003">Cell membrane</keyword>
<keyword id="KW-0139">CF(1)</keyword>
<keyword id="KW-0375">Hydrogen ion transport</keyword>
<keyword id="KW-0406">Ion transport</keyword>
<keyword id="KW-0472">Membrane</keyword>
<keyword id="KW-0813">Transport</keyword>
<evidence type="ECO:0000255" key="1">
    <source>
        <dbReference type="HAMAP-Rule" id="MF_01416"/>
    </source>
</evidence>
<proteinExistence type="inferred from homology"/>